<organismHost>
    <name type="scientific">Homo sapiens</name>
    <name type="common">Human</name>
    <dbReference type="NCBI Taxonomy" id="9606"/>
</organismHost>
<evidence type="ECO:0000250" key="1"/>
<evidence type="ECO:0000250" key="2">
    <source>
        <dbReference type="UniProtKB" id="P03347"/>
    </source>
</evidence>
<evidence type="ECO:0000250" key="3">
    <source>
        <dbReference type="UniProtKB" id="P03366"/>
    </source>
</evidence>
<evidence type="ECO:0000250" key="4">
    <source>
        <dbReference type="UniProtKB" id="P03367"/>
    </source>
</evidence>
<evidence type="ECO:0000250" key="5">
    <source>
        <dbReference type="UniProtKB" id="P04585"/>
    </source>
</evidence>
<evidence type="ECO:0000250" key="6">
    <source>
        <dbReference type="UniProtKB" id="P12493"/>
    </source>
</evidence>
<evidence type="ECO:0000250" key="7">
    <source>
        <dbReference type="UniProtKB" id="P12497"/>
    </source>
</evidence>
<evidence type="ECO:0000255" key="8"/>
<evidence type="ECO:0000255" key="9">
    <source>
        <dbReference type="PROSITE-ProRule" id="PRU00047"/>
    </source>
</evidence>
<evidence type="ECO:0000255" key="10">
    <source>
        <dbReference type="PROSITE-ProRule" id="PRU00275"/>
    </source>
</evidence>
<evidence type="ECO:0000255" key="11">
    <source>
        <dbReference type="PROSITE-ProRule" id="PRU00405"/>
    </source>
</evidence>
<evidence type="ECO:0000255" key="12">
    <source>
        <dbReference type="PROSITE-ProRule" id="PRU00408"/>
    </source>
</evidence>
<evidence type="ECO:0000255" key="13">
    <source>
        <dbReference type="PROSITE-ProRule" id="PRU00450"/>
    </source>
</evidence>
<evidence type="ECO:0000255" key="14">
    <source>
        <dbReference type="PROSITE-ProRule" id="PRU00457"/>
    </source>
</evidence>
<evidence type="ECO:0000255" key="15">
    <source>
        <dbReference type="PROSITE-ProRule" id="PRU00506"/>
    </source>
</evidence>
<evidence type="ECO:0000255" key="16">
    <source>
        <dbReference type="PROSITE-ProRule" id="PRU10094"/>
    </source>
</evidence>
<evidence type="ECO:0000256" key="17">
    <source>
        <dbReference type="SAM" id="MobiDB-lite"/>
    </source>
</evidence>
<evidence type="ECO:0000305" key="18"/>
<dbReference type="EC" id="3.4.23.16"/>
<dbReference type="EC" id="2.7.7.49"/>
<dbReference type="EC" id="2.7.7.7"/>
<dbReference type="EC" id="3.1.26.13"/>
<dbReference type="EC" id="3.1.13.2"/>
<dbReference type="EC" id="2.7.7.-" evidence="5"/>
<dbReference type="EC" id="3.1.-.-" evidence="5"/>
<dbReference type="EMBL" id="AF082395">
    <property type="protein sequence ID" value="AAD17766.1"/>
    <property type="status" value="ALT_SEQ"/>
    <property type="molecule type" value="Genomic_DNA"/>
</dbReference>
<dbReference type="SMR" id="Q9WC63"/>
<dbReference type="MEROPS" id="A02.001"/>
<dbReference type="PRO" id="PR:Q9WC63"/>
<dbReference type="Proteomes" id="UP000123434">
    <property type="component" value="Segment"/>
</dbReference>
<dbReference type="GO" id="GO:0043657">
    <property type="term" value="C:host cell"/>
    <property type="evidence" value="ECO:0007669"/>
    <property type="project" value="GOC"/>
</dbReference>
<dbReference type="GO" id="GO:0042025">
    <property type="term" value="C:host cell nucleus"/>
    <property type="evidence" value="ECO:0007669"/>
    <property type="project" value="UniProtKB-SubCell"/>
</dbReference>
<dbReference type="GO" id="GO:0020002">
    <property type="term" value="C:host cell plasma membrane"/>
    <property type="evidence" value="ECO:0007669"/>
    <property type="project" value="UniProtKB-SubCell"/>
</dbReference>
<dbReference type="GO" id="GO:0072494">
    <property type="term" value="C:host multivesicular body"/>
    <property type="evidence" value="ECO:0007669"/>
    <property type="project" value="UniProtKB-SubCell"/>
</dbReference>
<dbReference type="GO" id="GO:0016020">
    <property type="term" value="C:membrane"/>
    <property type="evidence" value="ECO:0007669"/>
    <property type="project" value="UniProtKB-KW"/>
</dbReference>
<dbReference type="GO" id="GO:0019013">
    <property type="term" value="C:viral nucleocapsid"/>
    <property type="evidence" value="ECO:0007669"/>
    <property type="project" value="UniProtKB-KW"/>
</dbReference>
<dbReference type="GO" id="GO:0055036">
    <property type="term" value="C:virion membrane"/>
    <property type="evidence" value="ECO:0007669"/>
    <property type="project" value="UniProtKB-SubCell"/>
</dbReference>
<dbReference type="GO" id="GO:0004190">
    <property type="term" value="F:aspartic-type endopeptidase activity"/>
    <property type="evidence" value="ECO:0007669"/>
    <property type="project" value="UniProtKB-KW"/>
</dbReference>
<dbReference type="GO" id="GO:0003677">
    <property type="term" value="F:DNA binding"/>
    <property type="evidence" value="ECO:0007669"/>
    <property type="project" value="UniProtKB-KW"/>
</dbReference>
<dbReference type="GO" id="GO:0003887">
    <property type="term" value="F:DNA-directed DNA polymerase activity"/>
    <property type="evidence" value="ECO:0007669"/>
    <property type="project" value="UniProtKB-KW"/>
</dbReference>
<dbReference type="GO" id="GO:0004533">
    <property type="term" value="F:exoribonuclease H activity"/>
    <property type="evidence" value="ECO:0007669"/>
    <property type="project" value="UniProtKB-EC"/>
</dbReference>
<dbReference type="GO" id="GO:0008289">
    <property type="term" value="F:lipid binding"/>
    <property type="evidence" value="ECO:0007669"/>
    <property type="project" value="UniProtKB-KW"/>
</dbReference>
<dbReference type="GO" id="GO:0035613">
    <property type="term" value="F:RNA stem-loop binding"/>
    <property type="evidence" value="ECO:0007669"/>
    <property type="project" value="TreeGrafter"/>
</dbReference>
<dbReference type="GO" id="GO:0003964">
    <property type="term" value="F:RNA-directed DNA polymerase activity"/>
    <property type="evidence" value="ECO:0007669"/>
    <property type="project" value="UniProtKB-KW"/>
</dbReference>
<dbReference type="GO" id="GO:0004523">
    <property type="term" value="F:RNA-DNA hybrid ribonuclease activity"/>
    <property type="evidence" value="ECO:0007669"/>
    <property type="project" value="InterPro"/>
</dbReference>
<dbReference type="GO" id="GO:0005198">
    <property type="term" value="F:structural molecule activity"/>
    <property type="evidence" value="ECO:0007669"/>
    <property type="project" value="InterPro"/>
</dbReference>
<dbReference type="GO" id="GO:0008270">
    <property type="term" value="F:zinc ion binding"/>
    <property type="evidence" value="ECO:0007669"/>
    <property type="project" value="UniProtKB-KW"/>
</dbReference>
<dbReference type="GO" id="GO:0015074">
    <property type="term" value="P:DNA integration"/>
    <property type="evidence" value="ECO:0007669"/>
    <property type="project" value="UniProtKB-KW"/>
</dbReference>
<dbReference type="GO" id="GO:0006310">
    <property type="term" value="P:DNA recombination"/>
    <property type="evidence" value="ECO:0007669"/>
    <property type="project" value="UniProtKB-KW"/>
</dbReference>
<dbReference type="GO" id="GO:0075713">
    <property type="term" value="P:establishment of integrated proviral latency"/>
    <property type="evidence" value="ECO:0007669"/>
    <property type="project" value="UniProtKB-KW"/>
</dbReference>
<dbReference type="GO" id="GO:0006508">
    <property type="term" value="P:proteolysis"/>
    <property type="evidence" value="ECO:0007669"/>
    <property type="project" value="UniProtKB-KW"/>
</dbReference>
<dbReference type="GO" id="GO:0046718">
    <property type="term" value="P:symbiont entry into host cell"/>
    <property type="evidence" value="ECO:0007669"/>
    <property type="project" value="UniProtKB-KW"/>
</dbReference>
<dbReference type="GO" id="GO:0052151">
    <property type="term" value="P:symbiont-mediated activation of host apoptosis"/>
    <property type="evidence" value="ECO:0007669"/>
    <property type="project" value="UniProtKB-KW"/>
</dbReference>
<dbReference type="GO" id="GO:0039657">
    <property type="term" value="P:symbiont-mediated suppression of host gene expression"/>
    <property type="evidence" value="ECO:0007669"/>
    <property type="project" value="UniProtKB-KW"/>
</dbReference>
<dbReference type="GO" id="GO:0044826">
    <property type="term" value="P:viral genome integration into host DNA"/>
    <property type="evidence" value="ECO:0007669"/>
    <property type="project" value="UniProtKB-KW"/>
</dbReference>
<dbReference type="GO" id="GO:0075732">
    <property type="term" value="P:viral penetration into host nucleus"/>
    <property type="evidence" value="ECO:0007669"/>
    <property type="project" value="UniProtKB-KW"/>
</dbReference>
<dbReference type="GO" id="GO:0075523">
    <property type="term" value="P:viral translational frameshifting"/>
    <property type="evidence" value="ECO:0007669"/>
    <property type="project" value="UniProtKB-KW"/>
</dbReference>
<dbReference type="CDD" id="cd05482">
    <property type="entry name" value="HIV_retropepsin_like"/>
    <property type="match status" value="1"/>
</dbReference>
<dbReference type="CDD" id="cd01645">
    <property type="entry name" value="RT_Rtv"/>
    <property type="match status" value="1"/>
</dbReference>
<dbReference type="FunFam" id="1.10.1200.30:FF:000001">
    <property type="entry name" value="Gag polyprotein"/>
    <property type="match status" value="1"/>
</dbReference>
<dbReference type="FunFam" id="1.10.375.10:FF:000001">
    <property type="entry name" value="Gag polyprotein"/>
    <property type="match status" value="1"/>
</dbReference>
<dbReference type="FunFam" id="4.10.60.10:FF:000001">
    <property type="entry name" value="Gag polyprotein"/>
    <property type="match status" value="1"/>
</dbReference>
<dbReference type="FunFam" id="3.30.420.10:FF:000025">
    <property type="entry name" value="Gag-Pol polyprotein"/>
    <property type="match status" value="1"/>
</dbReference>
<dbReference type="FunFam" id="3.30.70.270:FF:000006">
    <property type="entry name" value="Gag-Pol polyprotein"/>
    <property type="match status" value="1"/>
</dbReference>
<dbReference type="FunFam" id="2.30.30.10:FF:000001">
    <property type="entry name" value="POL polyprotein"/>
    <property type="match status" value="1"/>
</dbReference>
<dbReference type="FunFam" id="3.30.420.10:FF:000017">
    <property type="entry name" value="POL polyprotein"/>
    <property type="match status" value="1"/>
</dbReference>
<dbReference type="Gene3D" id="1.10.10.200">
    <property type="match status" value="1"/>
</dbReference>
<dbReference type="Gene3D" id="1.10.1200.30">
    <property type="match status" value="1"/>
</dbReference>
<dbReference type="Gene3D" id="3.30.70.270">
    <property type="match status" value="3"/>
</dbReference>
<dbReference type="Gene3D" id="2.40.70.10">
    <property type="entry name" value="Acid Proteases"/>
    <property type="match status" value="1"/>
</dbReference>
<dbReference type="Gene3D" id="3.10.10.10">
    <property type="entry name" value="HIV Type 1 Reverse Transcriptase, subunit A, domain 1"/>
    <property type="match status" value="1"/>
</dbReference>
<dbReference type="Gene3D" id="1.10.375.10">
    <property type="entry name" value="Human Immunodeficiency Virus Type 1 Capsid Protein"/>
    <property type="match status" value="1"/>
</dbReference>
<dbReference type="Gene3D" id="1.10.150.90">
    <property type="entry name" value="Immunodeficiency lentiviruses, gag gene matrix protein p17"/>
    <property type="match status" value="1"/>
</dbReference>
<dbReference type="Gene3D" id="2.30.30.10">
    <property type="entry name" value="Integrase, C-terminal domain superfamily, retroviral"/>
    <property type="match status" value="1"/>
</dbReference>
<dbReference type="Gene3D" id="3.30.420.10">
    <property type="entry name" value="Ribonuclease H-like superfamily/Ribonuclease H"/>
    <property type="match status" value="2"/>
</dbReference>
<dbReference type="Gene3D" id="1.20.5.760">
    <property type="entry name" value="Single helix bin"/>
    <property type="match status" value="1"/>
</dbReference>
<dbReference type="Gene3D" id="4.10.60.10">
    <property type="entry name" value="Zinc finger, CCHC-type"/>
    <property type="match status" value="1"/>
</dbReference>
<dbReference type="InterPro" id="IPR001969">
    <property type="entry name" value="Aspartic_peptidase_AS"/>
</dbReference>
<dbReference type="InterPro" id="IPR043502">
    <property type="entry name" value="DNA/RNA_pol_sf"/>
</dbReference>
<dbReference type="InterPro" id="IPR045345">
    <property type="entry name" value="Gag_p24_C"/>
</dbReference>
<dbReference type="InterPro" id="IPR017856">
    <property type="entry name" value="Integrase-like_N"/>
</dbReference>
<dbReference type="InterPro" id="IPR036862">
    <property type="entry name" value="Integrase_C_dom_sf_retrovir"/>
</dbReference>
<dbReference type="InterPro" id="IPR001037">
    <property type="entry name" value="Integrase_C_retrovir"/>
</dbReference>
<dbReference type="InterPro" id="IPR001584">
    <property type="entry name" value="Integrase_cat-core"/>
</dbReference>
<dbReference type="InterPro" id="IPR003308">
    <property type="entry name" value="Integrase_Zn-bd_dom_N"/>
</dbReference>
<dbReference type="InterPro" id="IPR000071">
    <property type="entry name" value="Lentvrl_matrix_N"/>
</dbReference>
<dbReference type="InterPro" id="IPR012344">
    <property type="entry name" value="Matrix_HIV/RSV_N"/>
</dbReference>
<dbReference type="InterPro" id="IPR001995">
    <property type="entry name" value="Peptidase_A2_cat"/>
</dbReference>
<dbReference type="InterPro" id="IPR021109">
    <property type="entry name" value="Peptidase_aspartic_dom_sf"/>
</dbReference>
<dbReference type="InterPro" id="IPR034170">
    <property type="entry name" value="Retropepsin-like_cat_dom"/>
</dbReference>
<dbReference type="InterPro" id="IPR018061">
    <property type="entry name" value="Retropepsins"/>
</dbReference>
<dbReference type="InterPro" id="IPR008916">
    <property type="entry name" value="Retrov_capsid_C"/>
</dbReference>
<dbReference type="InterPro" id="IPR008919">
    <property type="entry name" value="Retrov_capsid_N"/>
</dbReference>
<dbReference type="InterPro" id="IPR010999">
    <property type="entry name" value="Retrovr_matrix"/>
</dbReference>
<dbReference type="InterPro" id="IPR043128">
    <property type="entry name" value="Rev_trsase/Diguanyl_cyclase"/>
</dbReference>
<dbReference type="InterPro" id="IPR012337">
    <property type="entry name" value="RNaseH-like_sf"/>
</dbReference>
<dbReference type="InterPro" id="IPR002156">
    <property type="entry name" value="RNaseH_domain"/>
</dbReference>
<dbReference type="InterPro" id="IPR036397">
    <property type="entry name" value="RNaseH_sf"/>
</dbReference>
<dbReference type="InterPro" id="IPR000477">
    <property type="entry name" value="RT_dom"/>
</dbReference>
<dbReference type="InterPro" id="IPR010659">
    <property type="entry name" value="RVT_connect"/>
</dbReference>
<dbReference type="InterPro" id="IPR010661">
    <property type="entry name" value="RVT_thumb"/>
</dbReference>
<dbReference type="InterPro" id="IPR001878">
    <property type="entry name" value="Znf_CCHC"/>
</dbReference>
<dbReference type="InterPro" id="IPR036875">
    <property type="entry name" value="Znf_CCHC_sf"/>
</dbReference>
<dbReference type="PANTHER" id="PTHR41694">
    <property type="entry name" value="ENDOGENOUS RETROVIRUS GROUP K MEMBER POL PROTEIN"/>
    <property type="match status" value="1"/>
</dbReference>
<dbReference type="PANTHER" id="PTHR41694:SF3">
    <property type="entry name" value="RNA-DIRECTED DNA POLYMERASE-RELATED"/>
    <property type="match status" value="1"/>
</dbReference>
<dbReference type="Pfam" id="PF00540">
    <property type="entry name" value="Gag_p17"/>
    <property type="match status" value="1"/>
</dbReference>
<dbReference type="Pfam" id="PF19317">
    <property type="entry name" value="Gag_p24_C"/>
    <property type="match status" value="1"/>
</dbReference>
<dbReference type="Pfam" id="PF00552">
    <property type="entry name" value="IN_DBD_C"/>
    <property type="match status" value="1"/>
</dbReference>
<dbReference type="Pfam" id="PF02022">
    <property type="entry name" value="Integrase_Zn"/>
    <property type="match status" value="1"/>
</dbReference>
<dbReference type="Pfam" id="PF00075">
    <property type="entry name" value="RNase_H"/>
    <property type="match status" value="1"/>
</dbReference>
<dbReference type="Pfam" id="PF00665">
    <property type="entry name" value="rve"/>
    <property type="match status" value="1"/>
</dbReference>
<dbReference type="Pfam" id="PF00077">
    <property type="entry name" value="RVP"/>
    <property type="match status" value="1"/>
</dbReference>
<dbReference type="Pfam" id="PF00078">
    <property type="entry name" value="RVT_1"/>
    <property type="match status" value="1"/>
</dbReference>
<dbReference type="Pfam" id="PF06815">
    <property type="entry name" value="RVT_connect"/>
    <property type="match status" value="1"/>
</dbReference>
<dbReference type="Pfam" id="PF06817">
    <property type="entry name" value="RVT_thumb"/>
    <property type="match status" value="1"/>
</dbReference>
<dbReference type="Pfam" id="PF00098">
    <property type="entry name" value="zf-CCHC"/>
    <property type="match status" value="2"/>
</dbReference>
<dbReference type="PRINTS" id="PR00234">
    <property type="entry name" value="HIV1MATRIX"/>
</dbReference>
<dbReference type="SMART" id="SM00343">
    <property type="entry name" value="ZnF_C2HC"/>
    <property type="match status" value="2"/>
</dbReference>
<dbReference type="SUPFAM" id="SSF50630">
    <property type="entry name" value="Acid proteases"/>
    <property type="match status" value="1"/>
</dbReference>
<dbReference type="SUPFAM" id="SSF50122">
    <property type="entry name" value="DNA-binding domain of retroviral integrase"/>
    <property type="match status" value="1"/>
</dbReference>
<dbReference type="SUPFAM" id="SSF56672">
    <property type="entry name" value="DNA/RNA polymerases"/>
    <property type="match status" value="1"/>
</dbReference>
<dbReference type="SUPFAM" id="SSF46919">
    <property type="entry name" value="N-terminal Zn binding domain of HIV integrase"/>
    <property type="match status" value="1"/>
</dbReference>
<dbReference type="SUPFAM" id="SSF47836">
    <property type="entry name" value="Retroviral matrix proteins"/>
    <property type="match status" value="1"/>
</dbReference>
<dbReference type="SUPFAM" id="SSF47353">
    <property type="entry name" value="Retrovirus capsid dimerization domain-like"/>
    <property type="match status" value="1"/>
</dbReference>
<dbReference type="SUPFAM" id="SSF47943">
    <property type="entry name" value="Retrovirus capsid protein, N-terminal core domain"/>
    <property type="match status" value="1"/>
</dbReference>
<dbReference type="SUPFAM" id="SSF57756">
    <property type="entry name" value="Retrovirus zinc finger-like domains"/>
    <property type="match status" value="1"/>
</dbReference>
<dbReference type="SUPFAM" id="SSF53098">
    <property type="entry name" value="Ribonuclease H-like"/>
    <property type="match status" value="2"/>
</dbReference>
<dbReference type="PROSITE" id="PS50175">
    <property type="entry name" value="ASP_PROT_RETROV"/>
    <property type="match status" value="1"/>
</dbReference>
<dbReference type="PROSITE" id="PS00141">
    <property type="entry name" value="ASP_PROTEASE"/>
    <property type="match status" value="1"/>
</dbReference>
<dbReference type="PROSITE" id="PS50994">
    <property type="entry name" value="INTEGRASE"/>
    <property type="match status" value="1"/>
</dbReference>
<dbReference type="PROSITE" id="PS51027">
    <property type="entry name" value="INTEGRASE_DBD"/>
    <property type="match status" value="1"/>
</dbReference>
<dbReference type="PROSITE" id="PS50879">
    <property type="entry name" value="RNASE_H_1"/>
    <property type="match status" value="1"/>
</dbReference>
<dbReference type="PROSITE" id="PS50878">
    <property type="entry name" value="RT_POL"/>
    <property type="match status" value="1"/>
</dbReference>
<dbReference type="PROSITE" id="PS50158">
    <property type="entry name" value="ZF_CCHC"/>
    <property type="match status" value="2"/>
</dbReference>
<dbReference type="PROSITE" id="PS50876">
    <property type="entry name" value="ZF_INTEGRASE"/>
    <property type="match status" value="1"/>
</dbReference>
<comment type="function">
    <molecule>Gag-Pol polyprotein</molecule>
    <text evidence="1">Mediates, with Gag polyprotein, the essential events in virion assembly, including binding the plasma membrane, making the protein-protein interactions necessary to create spherical particles, recruiting the viral Env proteins, and packaging the genomic RNA via direct interactions with the RNA packaging sequence (Psi). Gag-Pol polyprotein may regulate its own translation, by the binding genomic RNA in the 5'-UTR. At low concentration, the polyprotein would promote translation, whereas at high concentration, the polyprotein would encapsidate genomic RNA and then shut off translation.</text>
</comment>
<comment type="function">
    <molecule>Matrix protein p17</molecule>
    <text evidence="7">Targets the polyprotein to the plasma membrane via a multipartite membrane-binding signal, that includes its myristoylated N-terminus. Matrix protein is part of the pre-integration complex. Implicated in the release from host cell mediated by Vpu. Binds to RNA.</text>
</comment>
<comment type="function">
    <molecule>Capsid protein p24</molecule>
    <text evidence="5 7">Forms the conical core that encapsulates the genomic RNA-nucleocapsid complex in the virion. Most core are conical, with only 7% tubular. The core is constituted by capsid protein hexamer subunits. The core is disassembled soon after virion entry (By similarity). Host restriction factors such as TRIM5-alpha or TRIMCyp bind retroviral capsids and cause premature capsid disassembly, leading to blocks in reverse transcription. Capsid restriction by TRIM5 is one of the factors which restricts HIV-1 to the human species. Host PIN1 apparently facilitates the virion uncoating. On the other hand, interactions with PDZD8 or CYPA stabilize the capsid.</text>
</comment>
<comment type="function">
    <molecule>Nucleocapsid protein p7</molecule>
    <text evidence="5">Encapsulates and protects viral dimeric unspliced genomic RNA (gRNA). Binds these RNAs through its zinc fingers. Acts as a nucleic acid chaperone which is involved in rearangement of nucleic acid secondary structure during gRNA retrotranscription. Also facilitates template switch leading to recombination. As part of the polyprotein, participates in gRNA dimerization, packaging, tRNA incorporation and virion assembly.</text>
</comment>
<comment type="function">
    <molecule>Protease</molecule>
    <text evidence="5 10">Aspartyl protease that mediates proteolytic cleavages of Gag and Gag-Pol polyproteins during or shortly after the release of the virion from the plasma membrane. Cleavages take place as an ordered, step-wise cascade to yield mature proteins. This process is called maturation. Displays maximal activity during the budding process just prior to particle release from the cell. Also cleaves Nef and Vif, probably concomitantly with viral structural proteins on maturation of virus particles. Hydrolyzes host EIF4GI and PABP1 in order to shut off the capped cellular mRNA translation. The resulting inhibition of cellular protein synthesis serves to ensure maximal viral gene expression and to evade host immune response. Also mediates cleavage of host YTHDF3. Mediates cleavage of host CARD8, thereby activating the CARD8 inflammasome, leading to the clearance of latent HIV-1 in patient CD4(+) T-cells after viral reactivation; in contrast, HIV-1 can evade CARD8-sensing when its protease remains inactive in infected cells prior to viral budding (By similarity).</text>
</comment>
<comment type="function">
    <molecule>Reverse transcriptase/ribonuclease H</molecule>
    <text evidence="5">Multifunctional enzyme that converts the viral RNA genome into dsDNA in the cytoplasm, shortly after virus entry into the cell. This enzyme displays a DNA polymerase activity that can copy either DNA or RNA templates, and a ribonuclease H (RNase H) activity that cleaves the RNA strand of RNA-DNA heteroduplexes in a partially processive 3' to 5' endonucleasic mode. Conversion of viral genomic RNA into dsDNA requires many steps. A tRNA(3)-Lys binds to the primer-binding site (PBS) situated at the 5'-end of the viral RNA. RT uses the 3' end of the tRNA primer to perform a short round of RNA-dependent minus-strand DNA synthesis. The reading proceeds through the U5 region and ends after the repeated (R) region which is present at both ends of viral RNA. The portion of the RNA-DNA heteroduplex is digested by the RNase H, resulting in a ssDNA product attached to the tRNA primer. This ssDNA/tRNA hybridizes with the identical R region situated at the 3' end of viral RNA. This template exchange, known as minus-strand DNA strong stop transfer, can be either intra- or intermolecular. RT uses the 3' end of this newly synthesized short ssDNA to perform the RNA-dependent minus-strand DNA synthesis of the whole template. RNase H digests the RNA template except for two polypurine tracts (PPTs) situated at the 5'-end and near the center of the genome. It is not clear if both polymerase and RNase H activities are simultaneous. RNase H probably can proceed both in a polymerase-dependent (RNA cut into small fragments by the same RT performing DNA synthesis) and a polymerase-independent mode (cleavage of remaining RNA fragments by free RTs). Secondly, RT performs DNA-directed plus-strand DNA synthesis using the PPTs that have not been removed by RNase H as primers. PPTs and tRNA primers are then removed by RNase H. The 3' and 5' ssDNA PBS regions hybridize to form a circular dsDNA intermediate. Strand displacement synthesis by RT to the PBS and PPT ends produces a blunt ended, linear dsDNA copy of the viral genome that includes long terminal repeats (LTRs) at both ends.</text>
</comment>
<comment type="function">
    <molecule>Integrase</molecule>
    <text evidence="5">Catalyzes viral DNA integration into the host chromosome, by performing a series of DNA cutting and joining reactions. This enzyme activity takes place after virion entry into a cell and reverse transcription of the RNA genome in dsDNA. The first step in the integration process is 3' processing. This step requires a complex comprising the viral genome, matrix protein, Vpr and integrase. This complex is called the pre-integration complex (PIC). The integrase protein removes 2 nucleotides from each 3' end of the viral DNA, leaving recessed CA OH's at the 3' ends. In the second step, the PIC enters cell nucleus. This process is mediated through integrase and Vpr proteins, and allows the virus to infect a non dividing cell. This ability to enter the nucleus is specific of lentiviruses, other retroviruses cannot and rely on cell division to access cell chromosomes. In the third step, termed strand transfer, the integrase protein joins the previously processed 3' ends to the 5' ends of strands of target cellular DNA at the site of integration. The 5'-ends are produced by integrase-catalyzed staggered cuts, 5 bp apart. A Y-shaped, gapped, recombination intermediate results, with the 5'-ends of the viral DNA strands and the 3' ends of target DNA strands remaining unjoined, flanking a gap of 5 bp. The last step is viral DNA integration into host chromosome. This involves host DNA repair synthesis in which the 5 bp gaps between the unjoined strands are filled in and then ligated. Since this process occurs at both cuts flanking the HIV genome, a 5 bp duplication of host DNA is produced at the ends of HIV-1 integration. Alternatively, Integrase may catalyze the excision of viral DNA just after strand transfer, this is termed disintegration.</text>
</comment>
<comment type="catalytic activity">
    <reaction evidence="10">
        <text>Specific for a P1 residue that is hydrophobic, and P1' variable, but often Pro.</text>
        <dbReference type="EC" id="3.4.23.16"/>
    </reaction>
</comment>
<comment type="catalytic activity">
    <reaction evidence="1">
        <text>Endohydrolysis of RNA in RNA/DNA hybrids. Three different cleavage modes: 1. sequence-specific internal cleavage of RNA. Human immunodeficiency virus type 1 and Moloney murine leukemia virus enzymes prefer to cleave the RNA strand one nucleotide away from the RNA-DNA junction. 2. RNA 5'-end directed cleavage 13-19 nucleotides from the RNA end. 3. DNA 3'-end directed cleavage 15-20 nucleotides away from the primer terminus.</text>
        <dbReference type="EC" id="3.1.26.13"/>
    </reaction>
</comment>
<comment type="catalytic activity">
    <reaction evidence="1">
        <text>3'-end directed exonucleolytic cleavage of viral RNA-DNA hybrid.</text>
        <dbReference type="EC" id="3.1.13.2"/>
    </reaction>
</comment>
<comment type="catalytic activity">
    <reaction evidence="11">
        <text>DNA(n) + a 2'-deoxyribonucleoside 5'-triphosphate = DNA(n+1) + diphosphate</text>
        <dbReference type="Rhea" id="RHEA:22508"/>
        <dbReference type="Rhea" id="RHEA-COMP:17339"/>
        <dbReference type="Rhea" id="RHEA-COMP:17340"/>
        <dbReference type="ChEBI" id="CHEBI:33019"/>
        <dbReference type="ChEBI" id="CHEBI:61560"/>
        <dbReference type="ChEBI" id="CHEBI:173112"/>
        <dbReference type="EC" id="2.7.7.49"/>
    </reaction>
</comment>
<comment type="catalytic activity">
    <reaction evidence="11">
        <text>DNA(n) + a 2'-deoxyribonucleoside 5'-triphosphate = DNA(n+1) + diphosphate</text>
        <dbReference type="Rhea" id="RHEA:22508"/>
        <dbReference type="Rhea" id="RHEA-COMP:17339"/>
        <dbReference type="Rhea" id="RHEA-COMP:17340"/>
        <dbReference type="ChEBI" id="CHEBI:33019"/>
        <dbReference type="ChEBI" id="CHEBI:61560"/>
        <dbReference type="ChEBI" id="CHEBI:173112"/>
        <dbReference type="EC" id="2.7.7.7"/>
    </reaction>
</comment>
<comment type="cofactor">
    <cofactor evidence="1">
        <name>Mg(2+)</name>
        <dbReference type="ChEBI" id="CHEBI:18420"/>
    </cofactor>
    <text evidence="1">Binds 2 magnesium ions for reverse transcriptase polymerase activity.</text>
</comment>
<comment type="cofactor">
    <cofactor evidence="1">
        <name>Mg(2+)</name>
        <dbReference type="ChEBI" id="CHEBI:18420"/>
    </cofactor>
    <text evidence="1">Binds 2 magnesium ions for ribonuclease H (RNase H) activity. Substrate-binding is a precondition for magnesium binding.</text>
</comment>
<comment type="cofactor">
    <cofactor evidence="1">
        <name>Mg(2+)</name>
        <dbReference type="ChEBI" id="CHEBI:18420"/>
    </cofactor>
    <text evidence="1">Magnesium ions are required for integrase activity. Binds at least 1, maybe 2 magnesium ions.</text>
</comment>
<comment type="activity regulation">
    <text evidence="1">Protease: The viral protease is inhibited by many synthetic protease inhibitors (PIs), such as amprenavir, atazanavir, indinavir, loprinavir, nelfinavir, ritonavir and saquinavir. Use of protease inhibitors in tritherapy regimens permit more ambitious therapeutic strategies. Reverse transcriptase/ribonuclease H: RT can be inhibited either by nucleoside RT inhibitors (NRTIs) or by non nucleoside RT inhibitors (NNRTIs). NRTIs act as chain terminators, whereas NNRTIs inhibit DNA polymerization by binding a small hydrophobic pocket near the RT active site and inducing an allosteric change in this region. Classical NRTIs are abacavir, adefovir (PMEA), didanosine (ddI), lamivudine (3TC), stavudine (d4T), tenofovir (PMPA), zalcitabine (ddC), and zidovudine (AZT). Classical NNRTIs are atevirdine (BHAP U-87201E), delavirdine, efavirenz (DMP-266), emivirine (I-EBU), and nevirapine (BI-RG-587). The tritherapies used as a basic effective treatment of AIDS associate two NRTIs and one NNRTI.</text>
</comment>
<comment type="subunit">
    <molecule>Matrix protein p17</molecule>
    <text evidence="5 7">Homotrimer; further assembles as hexamers of trimers (By similarity). Interacts with gp41 (via C-terminus) (By similarity). Interacts with host CALM1; this interaction induces a conformational change in the Matrix protein, triggering exposure of the myristate group (By similarity). Interacts with host AP3D1; this interaction allows the polyprotein trafficking to multivesicular bodies during virus assembly (By similarity). Part of the pre-integration complex (PIC) which is composed of viral genome, matrix protein, Vpr and integrase (By similarity).</text>
</comment>
<comment type="subunit">
    <molecule>Capsid protein p24</molecule>
    <text evidence="5 7">Homodimer; the homodimer further multimerizes as homohexamers or homopentamers. Interacts with human PPIA/CYPA (By similarity); This interaction stabilizes the capsid. Interacts with human NUP153 (By similarity). Interacts with host PDZD8; this interaction stabilizes the capsid (By similarity). Interacts with monkey TRIM5; this interaction destabilizes the capsid (By similarity).</text>
</comment>
<comment type="subunit">
    <molecule>Protease</molecule>
    <text evidence="5 7">Homodimer, whose active site consists of two apposed aspartic acid residues.</text>
</comment>
<comment type="subunit">
    <molecule>Reverse transcriptase/ribonuclease H</molecule>
    <text evidence="3">Heterodimer of p66 RT and p51 RT (RT p66/p51) (By similarity). Heterodimerization of RT is essential for DNA polymerase activity (By similarity). The overall folding of the subdomains is similar in p66 RT and p51 RT but the spatial arrangements of the subdomains are dramatically different (By similarity).</text>
</comment>
<comment type="subunit">
    <molecule>Integrase</molecule>
    <text evidence="4 5 7">Homotetramer; may further associate as a homohexadecamer (By similarity). Part of the pre-integration complex (PIC) which is composed of viral genome, matrix protein, Vpr and integrase. Interacts with human SMARCB1/INI1 and human PSIP1/LEDGF isoform 1. Interacts with human KPNA3; this interaction might play a role in nuclear import of the pre-integration complex (By similarity). Interacts with human NUP153; this interaction might play a role in nuclear import of the pre-integration complex (By similarity).</text>
</comment>
<comment type="subcellular location">
    <molecule>Gag-Pol polyprotein</molecule>
    <subcellularLocation>
        <location>Host cell membrane</location>
        <topology>Lipid-anchor</topology>
    </subcellularLocation>
    <subcellularLocation>
        <location>Host endosome</location>
        <location>Host multivesicular body</location>
    </subcellularLocation>
    <text evidence="7">These locations are linked to virus assembly sites. The main location is the cell membrane, but under some circumstances, late endosomal compartments can serve as productive sites for virion assembly.</text>
</comment>
<comment type="subcellular location">
    <molecule>Matrix protein p17</molecule>
    <subcellularLocation>
        <location>Virion membrane</location>
        <topology evidence="18">Lipid-anchor</topology>
    </subcellularLocation>
    <subcellularLocation>
        <location evidence="1">Host nucleus</location>
    </subcellularLocation>
    <subcellularLocation>
        <location evidence="1">Host cytoplasm</location>
    </subcellularLocation>
</comment>
<comment type="subcellular location">
    <molecule>Capsid protein p24</molecule>
    <subcellularLocation>
        <location evidence="18">Virion</location>
    </subcellularLocation>
</comment>
<comment type="subcellular location">
    <molecule>Nucleocapsid protein p7</molecule>
    <subcellularLocation>
        <location evidence="18">Virion</location>
    </subcellularLocation>
</comment>
<comment type="subcellular location">
    <molecule>Reverse transcriptase/ribonuclease H</molecule>
    <subcellularLocation>
        <location evidence="18">Virion</location>
    </subcellularLocation>
</comment>
<comment type="subcellular location">
    <molecule>Integrase</molecule>
    <subcellularLocation>
        <location evidence="18">Virion</location>
    </subcellularLocation>
    <subcellularLocation>
        <location evidence="18">Host nucleus</location>
    </subcellularLocation>
    <subcellularLocation>
        <location evidence="18">Host cytoplasm</location>
    </subcellularLocation>
    <text evidence="18">Nuclear at initial phase, cytoplasmic at assembly.</text>
</comment>
<comment type="alternative products">
    <event type="ribosomal frameshifting"/>
    <isoform>
        <id>Q9WC63-1</id>
        <name>Gag-Pol polyprotein</name>
        <sequence type="displayed"/>
    </isoform>
    <isoform>
        <id>Q9WC62-1</id>
        <name>Gag polyprotein</name>
        <sequence type="external"/>
    </isoform>
    <text>Translation results in the formation of the Gag polyprotein most of the time. Ribosomal frameshifting at the gag-pol genes boundary occurs at low frequency and produces the Gag-Pol polyprotein. This strategy of translation probably allows the virus to modulate the quantity of each viral protein. Maintenance of a correct Gag to Gag-Pol ratio is essential for RNA dimerization and viral infectivity.</text>
</comment>
<comment type="domain">
    <molecule>Reverse transcriptase/ribonuclease H</molecule>
    <text evidence="1">RT is structured in five subdomains: finger, palm, thumb, connection and RNase H. Within the palm subdomain, the 'primer grip' region is thought to be involved in the positioning of the primer terminus for accommodating the incoming nucleotide. The RNase H domain stabilizes the association of RT with primer-template.</text>
</comment>
<comment type="domain">
    <molecule>Reverse transcriptase/ribonuclease H</molecule>
    <text evidence="1">The tryptophan repeat motif is involved in RT p66/p51 dimerization (By similarity).</text>
</comment>
<comment type="domain">
    <molecule>Integrase</molecule>
    <text evidence="1">The core domain contains the D-x(n)-D-x(35)-E motif, named for the phylogenetically conserved glutamic acid and aspartic acid residues and the invariant 35 amino acid spacing between the second and third acidic residues. Each acidic residue of the D,D(35)E motif is independently essential for the 3'-processing and strand transfer activities of purified integrase protein.</text>
</comment>
<comment type="PTM">
    <molecule>Gag-Pol polyprotein</molecule>
    <text evidence="5 11">Specific enzymatic cleavages by the viral protease yield mature proteins. The protease is released by autocatalytic cleavage. The polyprotein is cleaved during and after budding, this process is termed maturation. Proteolytic cleavage of p66 RT removes the RNase H domain to yield the p51 RT subunit. Nucleocapsid protein p7 might be further cleaved after virus entry.</text>
</comment>
<comment type="PTM">
    <molecule>Matrix protein p17</molecule>
    <text evidence="5">Tyrosine phosphorylated presumably in the virion by a host kinase. Phosphorylation is apparently not a major regulator of membrane association.</text>
</comment>
<comment type="PTM">
    <molecule>Capsid protein p24</molecule>
    <text evidence="6">Phosphorylated possibly by host MAPK1; this phosphorylation is necessary for Pin1-mediated virion uncoating.</text>
</comment>
<comment type="PTM">
    <molecule>Nucleocapsid protein p7</molecule>
    <text evidence="2">Methylated by host PRMT6, impairing its function by reducing RNA annealing and the initiation of reverse transcription.</text>
</comment>
<comment type="miscellaneous">
    <molecule>Reverse transcriptase/ribonuclease H</molecule>
    <text evidence="1">Error-prone enzyme that lacks a proof-reading function. High mutations rate is a direct consequence of this characteristic. RT also displays frequent template switching leading to high recombination rate. Recombination mostly occurs between homologous regions of the two copackaged RNA genomes. If these two RNA molecules derive from different viral strains, reverse transcription will give rise to highly recombinated proviral DNAs.</text>
</comment>
<comment type="miscellaneous">
    <text>HIV-1 lineages are divided in three main groups, M (for Major), O (for Outlier), and N (for New, or Non-M, Non-O). The vast majority of strains found worldwide belong to the group M. Group O seems to be endemic to and largely confined to Cameroon and neighboring countries in West Central Africa, where these viruses represent a small minority of HIV-1 strains. The group N is represented by a limited number of isolates from Cameroonian persons. The group M is further subdivided in 9 clades or subtypes (A to D, F to H, J and K).</text>
</comment>
<comment type="miscellaneous">
    <text>Resistance to inhibitors associated with mutations are observed both in viral protease and in reverse transcriptase. Most of the time, single mutations confer only a modest reduction in drug susceptibility. Combination of several mutations is usually required to develop a high-level drug resistance. These mutations are predominantly found in clade B viruses and not in other genotypes. They are listed in the clade B representative isolate HXB2 (AC P04585).</text>
</comment>
<comment type="miscellaneous">
    <molecule>Isoform Gag-Pol polyprotein</molecule>
    <text>Produced by -1 ribosomal frameshifting.</text>
</comment>
<comment type="online information" name="HIV drug resistance mutations">
    <link uri="https://www.iasusa.org/hiv-drug-resistance/hiv-drug-resistance-mutations/"/>
</comment>
<comment type="online information" name="hivdb">
    <link uri="https://hivdb.stanford.edu"/>
    <text>HIV drug resistance database</text>
</comment>
<name>POL_HV1S9</name>
<keyword id="KW-1073">Activation of host caspases by virus</keyword>
<keyword id="KW-0014">AIDS</keyword>
<keyword id="KW-0064">Aspartyl protease</keyword>
<keyword id="KW-0167">Capsid protein</keyword>
<keyword id="KW-0229">DNA integration</keyword>
<keyword id="KW-0233">DNA recombination</keyword>
<keyword id="KW-0238">DNA-binding</keyword>
<keyword id="KW-0239">DNA-directed DNA polymerase</keyword>
<keyword id="KW-0255">Endonuclease</keyword>
<keyword id="KW-1262">Eukaryotic host gene expression shutoff by virus</keyword>
<keyword id="KW-1193">Eukaryotic host translation shutoff by virus</keyword>
<keyword id="KW-1032">Host cell membrane</keyword>
<keyword id="KW-1035">Host cytoplasm</keyword>
<keyword id="KW-1039">Host endosome</keyword>
<keyword id="KW-1190">Host gene expression shutoff by virus</keyword>
<keyword id="KW-1043">Host membrane</keyword>
<keyword id="KW-1048">Host nucleus</keyword>
<keyword id="KW-0945">Host-virus interaction</keyword>
<keyword id="KW-0378">Hydrolase</keyword>
<keyword id="KW-0446">Lipid-binding</keyword>
<keyword id="KW-0449">Lipoprotein</keyword>
<keyword id="KW-0460">Magnesium</keyword>
<keyword id="KW-0472">Membrane</keyword>
<keyword id="KW-0479">Metal-binding</keyword>
<keyword id="KW-1119">Modulation of host cell apoptosis by virus</keyword>
<keyword id="KW-0511">Multifunctional enzyme</keyword>
<keyword id="KW-0519">Myristate</keyword>
<keyword id="KW-0540">Nuclease</keyword>
<keyword id="KW-0548">Nucleotidyltransferase</keyword>
<keyword id="KW-0597">Phosphoprotein</keyword>
<keyword id="KW-0645">Protease</keyword>
<keyword id="KW-0677">Repeat</keyword>
<keyword id="KW-0688">Ribosomal frameshifting</keyword>
<keyword id="KW-0694">RNA-binding</keyword>
<keyword id="KW-0695">RNA-directed DNA polymerase</keyword>
<keyword id="KW-0808">Transferase</keyword>
<keyword id="KW-1179">Viral genome integration</keyword>
<keyword id="KW-0543">Viral nucleoprotein</keyword>
<keyword id="KW-1163">Viral penetration into host nucleus</keyword>
<keyword id="KW-1188">Viral release from host cell</keyword>
<keyword id="KW-0946">Virion</keyword>
<keyword id="KW-0917">Virion maturation</keyword>
<keyword id="KW-1160">Virus entry into host cell</keyword>
<keyword id="KW-0862">Zinc</keyword>
<keyword id="KW-0863">Zinc-finger</keyword>
<reference key="1">
    <citation type="journal article" date="1999" name="AIDS Res. Hum. Retroviruses">
        <title>Virtually full-length sequences of HIV type 1 subtype J reference strains.</title>
        <authorList>
            <person name="Laukkanen T."/>
            <person name="Albert J."/>
            <person name="Liitsola K."/>
            <person name="Green S.D."/>
            <person name="Carr J.K."/>
            <person name="Leitner T."/>
            <person name="McCutchan F.E."/>
            <person name="Salminen M.O."/>
        </authorList>
    </citation>
    <scope>NUCLEOTIDE SEQUENCE [GENOMIC DNA]</scope>
</reference>
<sequence length="1432" mass="162096">MGARASILSGGKLDDWEKIRLRPGGKKQYRIKHLVWASRELDRFALNPGLLESAKGCQQILVQLQPALQTGTEEIKSLYNTVATLYCVHQRIEIKDTKEALDKIEEIQNKNKQQTQKAETDKKDNSQVSQNYPIVQNLQGQPVHQALSPRTLNAWVKVIEEKAFSPEVIPMFSALSEGATPQDLNTMLNTIGGHQAAMQMLKDTINEEAAEWDRVHPVHAGPVAPGQVREPRGSDIAGTTSNLQEQIGWMTGNPPIPVGEIYKRWIILGLNKIVRMYSPVSILDIRQGPKEPFRDYVDRFFKALRAEQATQDVKNWMTDTLLVQNANPDCKTILKALGSGATLEEMMTACQGVGGPGHKARVLAEAMSQVTNTNIMMQRGNFRDHKRIVKCFNCGKQGHIAKNCRAPRKKGCWKCGKEGHQMKDCTERQANFFREDLAFQQREAREFSPEQTRANSPTSREPRVRRGDPLPETGAEGQGTVSSNFPQITLWQRPLVTIRIGGQLREALLDTGADDTVLEEIDLPGKWKPKMIGGIGGFIKVRQYNEVPIEIEGKKAIGTVLIGPTPVNIIGRNMLTQLGCTLNFPISPIETVPVKLKPGMDGPKIKQWPLTEEKIKALTQICAELEEEGKISRIGPENPYNTPVFAIKKKDSTKWRKLVDFRELNKRTQDFWEVQLGIPHPAGLKKKKSVTVLDVGDAYFSVPLYEDFRKYTAFTIPSINNETPGIRYQYNVLPQGWKGSPAIFQCSMTKILKPFRERNPEIVIYQYMDDLYVGSDLEIEQHRRKIKELREHLLKWGFYTPDKKHQKEPPFLWMGYELHPDKWTVQPIQLPEKEDWTVNDIQKLVGKLNWASQIYPGIKIKELCKLIRGAKALTDIVPLTREAELELAENKEILKEPVHGVYYDPARELIAEVQKQGLDQWTYQIYQEPFKNLKTGKYAKRRSAHTNDVKQLSQVVQKIALEAIVIWGKTPKFRLPIQKETWETWWTDYWQATWIPEWEFVNTPPLVKLWYQLEKEPIMGAETFYVDGASNRETKVGKAGYVTDKGRQKVITLTDTTNQKTELQAIYLALQDSGIEVNIVTDSQYALGIIQAQPDKSESELVNQIIEELIKKEKVYLSWVPAHKGIGGNEQVDKLVSSGIRKVLFLDGIDKAQEEHEKYHSNWRAMASDFNLPPVVAKEIVASCDKCQLKGEAMHGQVDCSPGIWQLDCTHLEGKVILVAVHVASGYIEAEVIPAETGQEAAFFILKLAGGWPVKAIHTDNGSNFTSGAVKAACWWADIKQEFGIPYNPQSQGVVESMNKELKKIIGQVREQAEHLKTAVQMAVFIHNFKRKGGIGGYSAGERIIDIIATDIQTKELQKQITKIQNFRVYYRDSRDPIWKGPAKLLWKGEGAVVIQDNSEIKVVPRRKAKIIRDYGKQMAGDDCVAGRQDED</sequence>
<accession>Q9WC63</accession>
<proteinExistence type="inferred from homology"/>
<feature type="initiator methionine" description="Removed; by host" evidence="1">
    <location>
        <position position="1"/>
    </location>
</feature>
<feature type="chain" id="PRO_0000261280" description="Gag-Pol polyprotein">
    <location>
        <begin position="2"/>
        <end position="1432"/>
    </location>
</feature>
<feature type="chain" id="PRO_0000246546" description="Matrix protein p17" evidence="1">
    <location>
        <begin position="2"/>
        <end position="132"/>
    </location>
</feature>
<feature type="chain" id="PRO_0000246547" description="Capsid protein p24" evidence="1">
    <location>
        <begin position="133"/>
        <end position="363"/>
    </location>
</feature>
<feature type="peptide" id="PRO_0000246548" description="Spacer peptide 1" evidence="1">
    <location>
        <begin position="364"/>
        <end position="376"/>
    </location>
</feature>
<feature type="chain" id="PRO_0000246549" description="Nucleocapsid protein p7" evidence="1">
    <location>
        <begin position="377"/>
        <end position="431"/>
    </location>
</feature>
<feature type="peptide" id="PRO_0000246730" description="Transframe peptide" evidence="8">
    <location>
        <begin position="432"/>
        <end position="439"/>
    </location>
</feature>
<feature type="chain" id="PRO_0000246550" description="p6-pol" evidence="8">
    <location>
        <begin position="440"/>
        <end position="485"/>
    </location>
</feature>
<feature type="chain" id="PRO_0000246551" description="Protease" evidence="1">
    <location>
        <begin position="486"/>
        <end position="584"/>
    </location>
</feature>
<feature type="chain" id="PRO_0000246552" description="Reverse transcriptase/ribonuclease H" evidence="1">
    <location>
        <begin position="585"/>
        <end position="1144"/>
    </location>
</feature>
<feature type="chain" id="PRO_0000246553" description="p51 RT" evidence="1">
    <location>
        <begin position="585"/>
        <end position="1024"/>
    </location>
</feature>
<feature type="chain" id="PRO_0000246554" description="p15" evidence="1">
    <location>
        <begin position="1025"/>
        <end position="1144"/>
    </location>
</feature>
<feature type="chain" id="PRO_0000246555" description="Integrase" evidence="1">
    <location>
        <begin position="1145"/>
        <end position="1432"/>
    </location>
</feature>
<feature type="domain" description="Peptidase A2" evidence="10">
    <location>
        <begin position="505"/>
        <end position="574"/>
    </location>
</feature>
<feature type="domain" description="Reverse transcriptase" evidence="11">
    <location>
        <begin position="628"/>
        <end position="818"/>
    </location>
</feature>
<feature type="domain" description="RNase H type-1" evidence="12">
    <location>
        <begin position="1018"/>
        <end position="1141"/>
    </location>
</feature>
<feature type="domain" description="Integrase catalytic" evidence="14">
    <location>
        <begin position="1198"/>
        <end position="1348"/>
    </location>
</feature>
<feature type="zinc finger region" description="CCHC-type 1" evidence="9">
    <location>
        <begin position="389"/>
        <end position="406"/>
    </location>
</feature>
<feature type="zinc finger region" description="CCHC-type 2" evidence="9">
    <location>
        <begin position="410"/>
        <end position="427"/>
    </location>
</feature>
<feature type="zinc finger region" description="Integrase-type" evidence="13">
    <location>
        <begin position="1147"/>
        <end position="1188"/>
    </location>
</feature>
<feature type="DNA-binding region" description="Integrase-type" evidence="15">
    <location>
        <begin position="1367"/>
        <end position="1414"/>
    </location>
</feature>
<feature type="region of interest" description="Interaction with Gp41" evidence="7">
    <location>
        <begin position="7"/>
        <end position="31"/>
    </location>
</feature>
<feature type="region of interest" description="Interaction with host CALM1" evidence="5">
    <location>
        <begin position="8"/>
        <end position="43"/>
    </location>
</feature>
<feature type="region of interest" description="Interaction with host AP3D1" evidence="7">
    <location>
        <begin position="12"/>
        <end position="19"/>
    </location>
</feature>
<feature type="region of interest" description="Interaction with membrane phosphatidylinositol 4,5-bisphosphate and RNA" evidence="7">
    <location>
        <begin position="14"/>
        <end position="33"/>
    </location>
</feature>
<feature type="region of interest" description="Interaction with membrane phosphatidylinositol 4,5-bisphosphate" evidence="7">
    <location>
        <begin position="73"/>
        <end position="77"/>
    </location>
</feature>
<feature type="region of interest" description="Interaction with human PPIA/CYPA and NUP153" evidence="7">
    <location>
        <begin position="189"/>
        <end position="227"/>
    </location>
</feature>
<feature type="region of interest" description="Dimerization/Multimerization of capsid protein p24" evidence="5">
    <location>
        <begin position="277"/>
        <end position="363"/>
    </location>
</feature>
<feature type="region of interest" description="Disordered" evidence="17">
    <location>
        <begin position="443"/>
        <end position="482"/>
    </location>
</feature>
<feature type="region of interest" description="Dimerization of protease" evidence="5">
    <location>
        <begin position="486"/>
        <end position="490"/>
    </location>
</feature>
<feature type="region of interest" description="Dimerization of protease" evidence="5">
    <location>
        <begin position="534"/>
        <end position="540"/>
    </location>
</feature>
<feature type="region of interest" description="Dimerization of protease" evidence="5">
    <location>
        <begin position="573"/>
        <end position="585"/>
    </location>
</feature>
<feature type="region of interest" description="RT 'primer grip'" evidence="1">
    <location>
        <begin position="811"/>
        <end position="819"/>
    </location>
</feature>
<feature type="short sequence motif" description="Nuclear export signal" evidence="1">
    <location>
        <begin position="16"/>
        <end position="22"/>
    </location>
</feature>
<feature type="short sequence motif" description="Nuclear localization signal" evidence="1">
    <location>
        <begin position="26"/>
        <end position="32"/>
    </location>
</feature>
<feature type="short sequence motif" description="Tryptophan repeat motif" evidence="1">
    <location>
        <begin position="982"/>
        <end position="998"/>
    </location>
</feature>
<feature type="compositionally biased region" description="Polar residues" evidence="17">
    <location>
        <begin position="449"/>
        <end position="459"/>
    </location>
</feature>
<feature type="compositionally biased region" description="Basic and acidic residues" evidence="17">
    <location>
        <begin position="460"/>
        <end position="469"/>
    </location>
</feature>
<feature type="active site" description="For protease activity; shared with dimeric partner" evidence="16">
    <location>
        <position position="510"/>
    </location>
</feature>
<feature type="binding site" evidence="1">
    <location>
        <position position="694"/>
    </location>
    <ligand>
        <name>Mg(2+)</name>
        <dbReference type="ChEBI" id="CHEBI:18420"/>
        <label>1</label>
        <note>catalytic; for reverse transcriptase activity</note>
    </ligand>
</feature>
<feature type="binding site" evidence="1">
    <location>
        <position position="769"/>
    </location>
    <ligand>
        <name>Mg(2+)</name>
        <dbReference type="ChEBI" id="CHEBI:18420"/>
        <label>1</label>
        <note>catalytic; for reverse transcriptase activity</note>
    </ligand>
</feature>
<feature type="binding site" evidence="1">
    <location>
        <position position="770"/>
    </location>
    <ligand>
        <name>Mg(2+)</name>
        <dbReference type="ChEBI" id="CHEBI:18420"/>
        <label>1</label>
        <note>catalytic; for reverse transcriptase activity</note>
    </ligand>
</feature>
<feature type="binding site" evidence="1">
    <location>
        <position position="1027"/>
    </location>
    <ligand>
        <name>Mg(2+)</name>
        <dbReference type="ChEBI" id="CHEBI:18420"/>
        <label>2</label>
        <note>catalytic; for RNase H activity</note>
    </ligand>
</feature>
<feature type="binding site" evidence="1">
    <location>
        <position position="1062"/>
    </location>
    <ligand>
        <name>Mg(2+)</name>
        <dbReference type="ChEBI" id="CHEBI:18420"/>
        <label>2</label>
        <note>catalytic; for RNase H activity</note>
    </ligand>
</feature>
<feature type="binding site" evidence="1">
    <location>
        <position position="1082"/>
    </location>
    <ligand>
        <name>Mg(2+)</name>
        <dbReference type="ChEBI" id="CHEBI:18420"/>
        <label>2</label>
        <note>catalytic; for RNase H activity</note>
    </ligand>
</feature>
<feature type="binding site" evidence="1">
    <location>
        <position position="1133"/>
    </location>
    <ligand>
        <name>Mg(2+)</name>
        <dbReference type="ChEBI" id="CHEBI:18420"/>
        <label>2</label>
        <note>catalytic; for RNase H activity</note>
    </ligand>
</feature>
<feature type="binding site" evidence="13">
    <location>
        <position position="1156"/>
    </location>
    <ligand>
        <name>Zn(2+)</name>
        <dbReference type="ChEBI" id="CHEBI:29105"/>
    </ligand>
</feature>
<feature type="binding site" evidence="13">
    <location>
        <position position="1160"/>
    </location>
    <ligand>
        <name>Zn(2+)</name>
        <dbReference type="ChEBI" id="CHEBI:29105"/>
    </ligand>
</feature>
<feature type="binding site" evidence="13">
    <location>
        <position position="1184"/>
    </location>
    <ligand>
        <name>Zn(2+)</name>
        <dbReference type="ChEBI" id="CHEBI:29105"/>
    </ligand>
</feature>
<feature type="binding site" evidence="13">
    <location>
        <position position="1187"/>
    </location>
    <ligand>
        <name>Zn(2+)</name>
        <dbReference type="ChEBI" id="CHEBI:29105"/>
    </ligand>
</feature>
<feature type="binding site" evidence="1">
    <location>
        <position position="1208"/>
    </location>
    <ligand>
        <name>Mg(2+)</name>
        <dbReference type="ChEBI" id="CHEBI:18420"/>
        <label>3</label>
        <note>catalytic; for integrase activity</note>
    </ligand>
</feature>
<feature type="binding site" evidence="1">
    <location>
        <position position="1260"/>
    </location>
    <ligand>
        <name>Mg(2+)</name>
        <dbReference type="ChEBI" id="CHEBI:18420"/>
        <label>3</label>
        <note>catalytic; for integrase activity</note>
    </ligand>
</feature>
<feature type="binding site" evidence="5">
    <location>
        <position position="1296"/>
    </location>
    <ligand>
        <name>Mg(2+)</name>
        <dbReference type="ChEBI" id="CHEBI:18420"/>
        <label>3</label>
        <note>catalytic; for integrase activity</note>
    </ligand>
</feature>
<feature type="site" description="Cleavage; by viral protease" evidence="1">
    <location>
        <begin position="132"/>
        <end position="133"/>
    </location>
</feature>
<feature type="site" description="Cis/trans isomerization of proline peptide bond; by human PPIA/CYPA" evidence="1">
    <location>
        <begin position="221"/>
        <end position="222"/>
    </location>
</feature>
<feature type="site" description="Cleavage; by viral protease" evidence="1">
    <location>
        <begin position="363"/>
        <end position="364"/>
    </location>
</feature>
<feature type="site" description="Cleavage; by viral protease" evidence="1">
    <location>
        <begin position="376"/>
        <end position="377"/>
    </location>
</feature>
<feature type="site" description="Cleavage; by viral protease" evidence="8">
    <location>
        <begin position="431"/>
        <end position="432"/>
    </location>
</feature>
<feature type="site" description="Cleavage; by viral protease" evidence="1">
    <location>
        <begin position="439"/>
        <end position="440"/>
    </location>
</feature>
<feature type="site" description="Cleavage; by viral protease" evidence="1">
    <location>
        <begin position="485"/>
        <end position="486"/>
    </location>
</feature>
<feature type="site" description="Cleavage; by viral protease" evidence="1">
    <location>
        <begin position="584"/>
        <end position="585"/>
    </location>
</feature>
<feature type="site" description="Essential for RT p66/p51 heterodimerization" evidence="1">
    <location>
        <position position="985"/>
    </location>
</feature>
<feature type="site" description="Essential for RT p66/p51 heterodimerization" evidence="1">
    <location>
        <position position="998"/>
    </location>
</feature>
<feature type="site" description="Cleavage; by viral protease; partial" evidence="1">
    <location>
        <begin position="1024"/>
        <end position="1025"/>
    </location>
</feature>
<feature type="site" description="Cleavage; by viral protease" evidence="1">
    <location>
        <begin position="1144"/>
        <end position="1145"/>
    </location>
</feature>
<feature type="modified residue" description="Phosphotyrosine; by host" evidence="1">
    <location>
        <position position="132"/>
    </location>
</feature>
<feature type="lipid moiety-binding region" description="N-myristoyl glycine; by host" evidence="1">
    <location>
        <position position="2"/>
    </location>
</feature>
<protein>
    <recommendedName>
        <fullName>Gag-Pol polyprotein</fullName>
    </recommendedName>
    <alternativeName>
        <fullName>Pr160Gag-Pol</fullName>
    </alternativeName>
    <component>
        <recommendedName>
            <fullName>Matrix protein p17</fullName>
            <shortName>MA</shortName>
        </recommendedName>
    </component>
    <component>
        <recommendedName>
            <fullName>Capsid protein p24</fullName>
            <shortName>CA</shortName>
        </recommendedName>
    </component>
    <component>
        <recommendedName>
            <fullName evidence="7">Spacer peptide 1</fullName>
            <shortName>SP1</shortName>
        </recommendedName>
        <alternativeName>
            <fullName>p2</fullName>
        </alternativeName>
    </component>
    <component>
        <recommendedName>
            <fullName>Nucleocapsid protein p7</fullName>
            <shortName>NC</shortName>
        </recommendedName>
    </component>
    <component>
        <recommendedName>
            <fullName>Transframe peptide</fullName>
            <shortName>TF</shortName>
        </recommendedName>
    </component>
    <component>
        <recommendedName>
            <fullName>p6-pol</fullName>
            <shortName>p6*</shortName>
        </recommendedName>
    </component>
    <component>
        <recommendedName>
            <fullName>Protease</fullName>
            <ecNumber>3.4.23.16</ecNumber>
        </recommendedName>
        <alternativeName>
            <fullName>PR</fullName>
        </alternativeName>
        <alternativeName>
            <fullName>Retropepsin</fullName>
        </alternativeName>
    </component>
    <component>
        <recommendedName>
            <fullName>Reverse transcriptase/ribonuclease H</fullName>
            <ecNumber>2.7.7.49</ecNumber>
            <ecNumber>2.7.7.7</ecNumber>
            <ecNumber>3.1.26.13</ecNumber>
        </recommendedName>
        <alternativeName>
            <fullName>Exoribonuclease H</fullName>
            <ecNumber>3.1.13.2</ecNumber>
        </alternativeName>
        <alternativeName>
            <fullName>p66 RT</fullName>
        </alternativeName>
    </component>
    <component>
        <recommendedName>
            <fullName>p51 RT</fullName>
        </recommendedName>
    </component>
    <component>
        <recommendedName>
            <fullName>p15</fullName>
        </recommendedName>
    </component>
    <component>
        <recommendedName>
            <fullName>Integrase</fullName>
            <shortName>IN</shortName>
            <ecNumber evidence="5">2.7.7.-</ecNumber>
            <ecNumber evidence="5">3.1.-.-</ecNumber>
        </recommendedName>
    </component>
</protein>
<gene>
    <name type="primary">gag-pol</name>
</gene>
<organism>
    <name type="scientific">Human immunodeficiency virus type 1 group M subtype J (isolate SE9173)</name>
    <name type="common">HIV-1</name>
    <dbReference type="NCBI Taxonomy" id="388904"/>
    <lineage>
        <taxon>Viruses</taxon>
        <taxon>Riboviria</taxon>
        <taxon>Pararnavirae</taxon>
        <taxon>Artverviricota</taxon>
        <taxon>Revtraviricetes</taxon>
        <taxon>Ortervirales</taxon>
        <taxon>Retroviridae</taxon>
        <taxon>Orthoretrovirinae</taxon>
        <taxon>Lentivirus</taxon>
        <taxon>Human immunodeficiency virus type 1</taxon>
    </lineage>
</organism>